<dbReference type="EMBL" id="AAFI02000022">
    <property type="protein sequence ID" value="EAL68578.1"/>
    <property type="molecule type" value="Genomic_DNA"/>
</dbReference>
<dbReference type="RefSeq" id="XP_642489.1">
    <property type="nucleotide sequence ID" value="XM_637397.1"/>
</dbReference>
<dbReference type="FunCoup" id="Q54Z64">
    <property type="interactions" value="87"/>
</dbReference>
<dbReference type="STRING" id="44689.Q54Z64"/>
<dbReference type="GlyCosmos" id="Q54Z64">
    <property type="glycosylation" value="2 sites, No reported glycans"/>
</dbReference>
<dbReference type="GlyGen" id="Q54Z64">
    <property type="glycosylation" value="2 sites"/>
</dbReference>
<dbReference type="PaxDb" id="44689-DDB0229834"/>
<dbReference type="EnsemblProtists" id="EAL68578">
    <property type="protein sequence ID" value="EAL68578"/>
    <property type="gene ID" value="DDB_G0277809"/>
</dbReference>
<dbReference type="GeneID" id="8621200"/>
<dbReference type="KEGG" id="ddi:DDB_G0277809"/>
<dbReference type="dictyBase" id="DDB_G0277809">
    <property type="gene designation" value="cfaA"/>
</dbReference>
<dbReference type="VEuPathDB" id="AmoebaDB:DDB_G0277809"/>
<dbReference type="eggNOG" id="ENOG502RIJJ">
    <property type="taxonomic scope" value="Eukaryota"/>
</dbReference>
<dbReference type="HOGENOM" id="CLU_1236959_0_0_1"/>
<dbReference type="InParanoid" id="Q54Z64"/>
<dbReference type="OMA" id="DECFVEC"/>
<dbReference type="PhylomeDB" id="Q54Z64"/>
<dbReference type="PRO" id="PR:Q54Z64"/>
<dbReference type="Proteomes" id="UP000002195">
    <property type="component" value="Chromosome 2"/>
</dbReference>
<dbReference type="GO" id="GO:0005576">
    <property type="term" value="C:extracellular region"/>
    <property type="evidence" value="ECO:0007669"/>
    <property type="project" value="UniProtKB-SubCell"/>
</dbReference>
<dbReference type="InterPro" id="IPR021837">
    <property type="entry name" value="CfaA/B/C"/>
</dbReference>
<dbReference type="PANTHER" id="PTHR33714">
    <property type="entry name" value="COUNTING FACTOR-ASSOCIATED PROTEIN A-RELATED"/>
    <property type="match status" value="1"/>
</dbReference>
<dbReference type="PANTHER" id="PTHR33714:SF3">
    <property type="entry name" value="COUNTING FACTOR-ASSOCIATED PROTEIN A-RELATED"/>
    <property type="match status" value="1"/>
</dbReference>
<dbReference type="Pfam" id="PF11912">
    <property type="entry name" value="CfaA_B_C"/>
    <property type="match status" value="1"/>
</dbReference>
<reference key="1">
    <citation type="journal article" date="2002" name="Nature">
        <title>Sequence and analysis of chromosome 2 of Dictyostelium discoideum.</title>
        <authorList>
            <person name="Gloeckner G."/>
            <person name="Eichinger L."/>
            <person name="Szafranski K."/>
            <person name="Pachebat J.A."/>
            <person name="Bankier A.T."/>
            <person name="Dear P.H."/>
            <person name="Lehmann R."/>
            <person name="Baumgart C."/>
            <person name="Parra G."/>
            <person name="Abril J.F."/>
            <person name="Guigo R."/>
            <person name="Kumpf K."/>
            <person name="Tunggal B."/>
            <person name="Cox E.C."/>
            <person name="Quail M.A."/>
            <person name="Platzer M."/>
            <person name="Rosenthal A."/>
            <person name="Noegel A.A."/>
        </authorList>
    </citation>
    <scope>NUCLEOTIDE SEQUENCE [LARGE SCALE GENOMIC DNA]</scope>
    <source>
        <strain>AX4</strain>
    </source>
</reference>
<reference key="2">
    <citation type="journal article" date="2005" name="Nature">
        <title>The genome of the social amoeba Dictyostelium discoideum.</title>
        <authorList>
            <person name="Eichinger L."/>
            <person name="Pachebat J.A."/>
            <person name="Gloeckner G."/>
            <person name="Rajandream M.A."/>
            <person name="Sucgang R."/>
            <person name="Berriman M."/>
            <person name="Song J."/>
            <person name="Olsen R."/>
            <person name="Szafranski K."/>
            <person name="Xu Q."/>
            <person name="Tunggal B."/>
            <person name="Kummerfeld S."/>
            <person name="Madera M."/>
            <person name="Konfortov B.A."/>
            <person name="Rivero F."/>
            <person name="Bankier A.T."/>
            <person name="Lehmann R."/>
            <person name="Hamlin N."/>
            <person name="Davies R."/>
            <person name="Gaudet P."/>
            <person name="Fey P."/>
            <person name="Pilcher K."/>
            <person name="Chen G."/>
            <person name="Saunders D."/>
            <person name="Sodergren E.J."/>
            <person name="Davis P."/>
            <person name="Kerhornou A."/>
            <person name="Nie X."/>
            <person name="Hall N."/>
            <person name="Anjard C."/>
            <person name="Hemphill L."/>
            <person name="Bason N."/>
            <person name="Farbrother P."/>
            <person name="Desany B."/>
            <person name="Just E."/>
            <person name="Morio T."/>
            <person name="Rost R."/>
            <person name="Churcher C.M."/>
            <person name="Cooper J."/>
            <person name="Haydock S."/>
            <person name="van Driessche N."/>
            <person name="Cronin A."/>
            <person name="Goodhead I."/>
            <person name="Muzny D.M."/>
            <person name="Mourier T."/>
            <person name="Pain A."/>
            <person name="Lu M."/>
            <person name="Harper D."/>
            <person name="Lindsay R."/>
            <person name="Hauser H."/>
            <person name="James K.D."/>
            <person name="Quiles M."/>
            <person name="Madan Babu M."/>
            <person name="Saito T."/>
            <person name="Buchrieser C."/>
            <person name="Wardroper A."/>
            <person name="Felder M."/>
            <person name="Thangavelu M."/>
            <person name="Johnson D."/>
            <person name="Knights A."/>
            <person name="Loulseged H."/>
            <person name="Mungall K.L."/>
            <person name="Oliver K."/>
            <person name="Price C."/>
            <person name="Quail M.A."/>
            <person name="Urushihara H."/>
            <person name="Hernandez J."/>
            <person name="Rabbinowitsch E."/>
            <person name="Steffen D."/>
            <person name="Sanders M."/>
            <person name="Ma J."/>
            <person name="Kohara Y."/>
            <person name="Sharp S."/>
            <person name="Simmonds M.N."/>
            <person name="Spiegler S."/>
            <person name="Tivey A."/>
            <person name="Sugano S."/>
            <person name="White B."/>
            <person name="Walker D."/>
            <person name="Woodward J.R."/>
            <person name="Winckler T."/>
            <person name="Tanaka Y."/>
            <person name="Shaulsky G."/>
            <person name="Schleicher M."/>
            <person name="Weinstock G.M."/>
            <person name="Rosenthal A."/>
            <person name="Cox E.C."/>
            <person name="Chisholm R.L."/>
            <person name="Gibbs R.A."/>
            <person name="Loomis W.F."/>
            <person name="Platzer M."/>
            <person name="Kay R.R."/>
            <person name="Williams J.G."/>
            <person name="Dear P.H."/>
            <person name="Noegel A.A."/>
            <person name="Barrell B.G."/>
            <person name="Kuspa A."/>
        </authorList>
    </citation>
    <scope>NUCLEOTIDE SEQUENCE [LARGE SCALE GENOMIC DNA]</scope>
    <source>
        <strain>AX4</strain>
    </source>
</reference>
<protein>
    <recommendedName>
        <fullName>Counting factor-associated protein A</fullName>
    </recommendedName>
</protein>
<sequence length="233" mass="25834">MKLLNSLILLVLTCLVSSINTQFISIQKYDFSGNCKNSSDSASSFEASSESAAICMQNDLLSGIVTNEGVCLIFNEVPTTFIISTKGDYIVRSIYDINDNNCQGGIIENKAIEIDECFVECADDYHGSTYLFSTETSLNYPSNTFMEISYNGECDGQWKTSFNYLQYYIVNKCNVAHEIETHTFSVGCNSTSSWVSEYAGEVCTVEPTVTTSYPIVDNCGDLDNSNFIDYCNI</sequence>
<proteinExistence type="inferred from homology"/>
<accession>Q54Z64</accession>
<accession>Q86KS6</accession>
<feature type="signal peptide" evidence="1">
    <location>
        <begin position="1"/>
        <end position="21"/>
    </location>
</feature>
<feature type="chain" id="PRO_0000388247" description="Counting factor-associated protein A">
    <location>
        <begin position="22"/>
        <end position="233"/>
    </location>
</feature>
<feature type="glycosylation site" description="N-linked (GlcNAc...) asparagine" evidence="1">
    <location>
        <position position="37"/>
    </location>
</feature>
<feature type="glycosylation site" description="N-linked (GlcNAc...) asparagine" evidence="1">
    <location>
        <position position="189"/>
    </location>
</feature>
<organism>
    <name type="scientific">Dictyostelium discoideum</name>
    <name type="common">Social amoeba</name>
    <dbReference type="NCBI Taxonomy" id="44689"/>
    <lineage>
        <taxon>Eukaryota</taxon>
        <taxon>Amoebozoa</taxon>
        <taxon>Evosea</taxon>
        <taxon>Eumycetozoa</taxon>
        <taxon>Dictyostelia</taxon>
        <taxon>Dictyosteliales</taxon>
        <taxon>Dictyosteliaceae</taxon>
        <taxon>Dictyostelium</taxon>
    </lineage>
</organism>
<evidence type="ECO:0000255" key="1"/>
<evidence type="ECO:0000305" key="2"/>
<name>CFAA_DICDI</name>
<comment type="subcellular location">
    <subcellularLocation>
        <location evidence="2">Secreted</location>
    </subcellularLocation>
</comment>
<keyword id="KW-0325">Glycoprotein</keyword>
<keyword id="KW-1185">Reference proteome</keyword>
<keyword id="KW-0964">Secreted</keyword>
<keyword id="KW-0732">Signal</keyword>
<gene>
    <name type="primary">cfaA</name>
    <name type="ORF">DDB_G0277809</name>
</gene>